<comment type="function">
    <text evidence="1">Could be involved in insertion of integral membrane proteins into the membrane.</text>
</comment>
<comment type="subcellular location">
    <subcellularLocation>
        <location evidence="1">Cell inner membrane</location>
        <topology evidence="1">Peripheral membrane protein</topology>
        <orientation evidence="1">Cytoplasmic side</orientation>
    </subcellularLocation>
</comment>
<comment type="similarity">
    <text evidence="1">Belongs to the UPF0161 family.</text>
</comment>
<reference key="1">
    <citation type="journal article" date="2011" name="MBio">
        <title>Novel metabolic attributes of the genus Cyanothece, comprising a group of unicellular nitrogen-fixing Cyanobacteria.</title>
        <authorList>
            <person name="Bandyopadhyay A."/>
            <person name="Elvitigala T."/>
            <person name="Welsh E."/>
            <person name="Stockel J."/>
            <person name="Liberton M."/>
            <person name="Min H."/>
            <person name="Sherman L.A."/>
            <person name="Pakrasi H.B."/>
        </authorList>
    </citation>
    <scope>NUCLEOTIDE SEQUENCE [LARGE SCALE GENOMIC DNA]</scope>
    <source>
        <strain>PCC 8801 / RF-1</strain>
    </source>
</reference>
<evidence type="ECO:0000255" key="1">
    <source>
        <dbReference type="HAMAP-Rule" id="MF_00386"/>
    </source>
</evidence>
<organism>
    <name type="scientific">Rippkaea orientalis (strain PCC 8801 / RF-1)</name>
    <name type="common">Cyanothece sp. (strain PCC 8801)</name>
    <dbReference type="NCBI Taxonomy" id="41431"/>
    <lineage>
        <taxon>Bacteria</taxon>
        <taxon>Bacillati</taxon>
        <taxon>Cyanobacteriota</taxon>
        <taxon>Cyanophyceae</taxon>
        <taxon>Oscillatoriophycideae</taxon>
        <taxon>Chroococcales</taxon>
        <taxon>Aphanothecaceae</taxon>
        <taxon>Rippkaea</taxon>
        <taxon>Rippkaea orientalis</taxon>
    </lineage>
</organism>
<accession>B7JWS8</accession>
<name>YIDD_RIPO1</name>
<gene>
    <name type="ordered locus">PCC8801_1730</name>
</gene>
<sequence>MKTLLIVLIKGYRNFISPLFPPSCRFQPTCSKYALEAVERFGVLHGGSLAIKRILRCHPFHPGGYDPVPLVDSSSKRSQ</sequence>
<feature type="chain" id="PRO_1000122634" description="Putative membrane protein insertion efficiency factor">
    <location>
        <begin position="1"/>
        <end position="79"/>
    </location>
</feature>
<proteinExistence type="inferred from homology"/>
<protein>
    <recommendedName>
        <fullName evidence="1">Putative membrane protein insertion efficiency factor</fullName>
    </recommendedName>
</protein>
<dbReference type="EMBL" id="CP001287">
    <property type="protein sequence ID" value="ACK65777.1"/>
    <property type="molecule type" value="Genomic_DNA"/>
</dbReference>
<dbReference type="RefSeq" id="WP_012595050.1">
    <property type="nucleotide sequence ID" value="NC_011726.1"/>
</dbReference>
<dbReference type="STRING" id="41431.PCC8801_1730"/>
<dbReference type="KEGG" id="cyp:PCC8801_1730"/>
<dbReference type="eggNOG" id="COG0759">
    <property type="taxonomic scope" value="Bacteria"/>
</dbReference>
<dbReference type="HOGENOM" id="CLU_144811_5_2_3"/>
<dbReference type="OrthoDB" id="9801753at2"/>
<dbReference type="Proteomes" id="UP000008204">
    <property type="component" value="Chromosome"/>
</dbReference>
<dbReference type="GO" id="GO:0005886">
    <property type="term" value="C:plasma membrane"/>
    <property type="evidence" value="ECO:0007669"/>
    <property type="project" value="UniProtKB-SubCell"/>
</dbReference>
<dbReference type="HAMAP" id="MF_00386">
    <property type="entry name" value="UPF0161_YidD"/>
    <property type="match status" value="1"/>
</dbReference>
<dbReference type="InterPro" id="IPR002696">
    <property type="entry name" value="Membr_insert_effic_factor_YidD"/>
</dbReference>
<dbReference type="NCBIfam" id="TIGR00278">
    <property type="entry name" value="membrane protein insertion efficiency factor YidD"/>
    <property type="match status" value="1"/>
</dbReference>
<dbReference type="PANTHER" id="PTHR33383">
    <property type="entry name" value="MEMBRANE PROTEIN INSERTION EFFICIENCY FACTOR-RELATED"/>
    <property type="match status" value="1"/>
</dbReference>
<dbReference type="PANTHER" id="PTHR33383:SF1">
    <property type="entry name" value="MEMBRANE PROTEIN INSERTION EFFICIENCY FACTOR-RELATED"/>
    <property type="match status" value="1"/>
</dbReference>
<dbReference type="Pfam" id="PF01809">
    <property type="entry name" value="YidD"/>
    <property type="match status" value="1"/>
</dbReference>
<dbReference type="SMART" id="SM01234">
    <property type="entry name" value="Haemolytic"/>
    <property type="match status" value="1"/>
</dbReference>
<keyword id="KW-0997">Cell inner membrane</keyword>
<keyword id="KW-1003">Cell membrane</keyword>
<keyword id="KW-0472">Membrane</keyword>
<keyword id="KW-1185">Reference proteome</keyword>